<name>SERA5_PLAFG</name>
<evidence type="ECO:0000250" key="1">
    <source>
        <dbReference type="UniProtKB" id="P69193"/>
    </source>
</evidence>
<evidence type="ECO:0000250" key="2">
    <source>
        <dbReference type="UniProtKB" id="Q9TY95"/>
    </source>
</evidence>
<evidence type="ECO:0000255" key="3"/>
<evidence type="ECO:0000255" key="4">
    <source>
        <dbReference type="PROSITE-ProRule" id="PRU10089"/>
    </source>
</evidence>
<evidence type="ECO:0000255" key="5">
    <source>
        <dbReference type="PROSITE-ProRule" id="PRU10090"/>
    </source>
</evidence>
<evidence type="ECO:0000256" key="6">
    <source>
        <dbReference type="SAM" id="MobiDB-lite"/>
    </source>
</evidence>
<evidence type="ECO:0000269" key="7">
    <source>
    </source>
</evidence>
<evidence type="ECO:0000269" key="8">
    <source>
    </source>
</evidence>
<evidence type="ECO:0000303" key="9">
    <source>
    </source>
</evidence>
<evidence type="ECO:0000303" key="10">
    <source>
    </source>
</evidence>
<evidence type="ECO:0000305" key="11"/>
<evidence type="ECO:0007744" key="12">
    <source>
        <dbReference type="PDB" id="2MUG"/>
    </source>
</evidence>
<evidence type="ECO:0007829" key="13">
    <source>
        <dbReference type="PDB" id="2MUG"/>
    </source>
</evidence>
<organism>
    <name type="scientific">Plasmodium falciparum (isolate FCR-3 / Gambia)</name>
    <dbReference type="NCBI Taxonomy" id="5838"/>
    <lineage>
        <taxon>Eukaryota</taxon>
        <taxon>Sar</taxon>
        <taxon>Alveolata</taxon>
        <taxon>Apicomplexa</taxon>
        <taxon>Aconoidasida</taxon>
        <taxon>Haemosporida</taxon>
        <taxon>Plasmodiidae</taxon>
        <taxon>Plasmodium</taxon>
        <taxon>Plasmodium (Laverania)</taxon>
    </lineage>
</organism>
<sequence length="989" mass="111095">MKSYISLFFILCVIFNKNVIKCTGESQTGNTGGGQAGNTVGDQAGSTGGSPQGSTGASQPGSSEPSNPVSSGHSVSTVSVSQTSTSSEKQDTIQVKSALLKDYMGLKVTGPCNENFIMFLVPHIYIDVDTEDTNIELRTTLKETNNAISFESNSGSLEKKKYVKLPSNGTTGEQGSSTGTVRGDTEPISDSSSSSSSSSSSSSSSSSSSSSSSSSSSSSSSSSSSESLPANGPDSPTVKPPRNLQNICETGKNFKLVVYIKENTLIIKWKVYGETKDTTENNKVDVRKYLINEKETPFTSILIHAYKEHNGTNLIESKNYALGSDIPEKCDTLASNCFLSGNFNIEKCFQCALLVEKENKNDVCYKYLSEDIVSNFKEIKAETEDDDEDDYTEYKLTESIDNILVKMFKTNENNDKSELIKLEEVDDSLKLELMNYCSLLKDVDTTGTLDNYGMGNEMDIFNNLKRLLIYHSEENINTLKNKFRNAAVCLKNVDDWIVNKRGLVLPELNYDLEYFNEHLYNDKNSPEDKDNKGKGVVHVDTTLEKEDTLSYDNSDNMFCNKEYCNRLKDENNCISNLQVEDQGNCDTSWIFASKYHLETIRCMKGYEPTKISALYVANCYKGEHKDRCDEGSSPMEFLQIIEDYGFLPAESNYPYNYVKVGEQCPKVEDHWMNLWDNGKILHNKNEPNSLDGKGYTAYESERFHDNMDAFVKIIKTEVMNKGSVIAYIKAENVMGYEFSGKKVQNLCGDDTADHAVNIVGYGNYVNSEGEKKSYWIVRNSWGPYWGDEGYFKVDMYGPTHCHFNFIHSVVIFNVDLPMNNKTTKKESKIYDYYLKASPEFYHNLYFKNFNVGKKNLFSEKEDNENNKKLGNNYIIFGQDTAGSGQSGKESNTALESAGTSNEVSERVHVYHILKHIKDGKIRMGMRKYIDTQDVNKKHSCTRSYAFNPENYEKCVNLCNVNWKTCEEKTSPGLCLSKLDTNNECYFCYV</sequence>
<keyword id="KW-0002">3D-structure</keyword>
<keyword id="KW-1003">Cell membrane</keyword>
<keyword id="KW-0903">Direct protein sequencing</keyword>
<keyword id="KW-1015">Disulfide bond</keyword>
<keyword id="KW-0325">Glycoprotein</keyword>
<keyword id="KW-0378">Hydrolase</keyword>
<keyword id="KW-0461">Malaria</keyword>
<keyword id="KW-0472">Membrane</keyword>
<keyword id="KW-0597">Phosphoprotein</keyword>
<keyword id="KW-0645">Protease</keyword>
<keyword id="KW-0964">Secreted</keyword>
<keyword id="KW-0732">Signal</keyword>
<keyword id="KW-0788">Thiol protease</keyword>
<keyword id="KW-0865">Zymogen</keyword>
<protein>
    <recommendedName>
        <fullName evidence="11">Serine-repeat antigen protein 5</fullName>
        <ecNumber evidence="2">3.4.22.-</ecNumber>
    </recommendedName>
    <alternativeName>
        <fullName>111 kDa antigen</fullName>
    </alternativeName>
    <alternativeName>
        <fullName evidence="11">Serine protease SERA5</fullName>
    </alternativeName>
    <alternativeName>
        <fullName>p126</fullName>
    </alternativeName>
    <component>
        <recommendedName>
            <fullName evidence="9">p47</fullName>
        </recommendedName>
        <alternativeName>
            <fullName evidence="1">SER36</fullName>
        </alternativeName>
    </component>
    <component>
        <recommendedName>
            <fullName evidence="9">p56</fullName>
        </recommendedName>
    </component>
    <component>
        <recommendedName>
            <fullName evidence="9">p50</fullName>
        </recommendedName>
    </component>
    <component>
        <recommendedName>
            <fullName evidence="9">p18</fullName>
        </recommendedName>
    </component>
    <component>
        <recommendedName>
            <fullName evidence="2">p25n</fullName>
        </recommendedName>
    </component>
    <component>
        <recommendedName>
            <fullName evidence="2">p25c</fullName>
        </recommendedName>
    </component>
</protein>
<feature type="signal peptide" evidence="3">
    <location>
        <begin position="1"/>
        <end position="16"/>
    </location>
</feature>
<feature type="chain" id="PRO_0000026481" description="Serine-repeat antigen protein 5">
    <location>
        <begin position="17"/>
        <end position="989"/>
    </location>
</feature>
<feature type="chain" id="PRO_0000450191" description="p47" evidence="8">
    <location>
        <begin position="23"/>
        <end position="382"/>
    </location>
</feature>
<feature type="chain" id="PRO_0000450192" description="p25n" evidence="2">
    <location>
        <begin position="23"/>
        <end position="184"/>
    </location>
</feature>
<feature type="chain" id="PRO_0000450193" description="p25c" evidence="2">
    <location>
        <begin position="185"/>
        <end position="382"/>
    </location>
</feature>
<feature type="chain" id="PRO_0000450194" description="p56" evidence="2">
    <location>
        <begin position="383"/>
        <end position="878"/>
    </location>
</feature>
<feature type="chain" id="PRO_0000450195" description="p50" evidence="8">
    <location>
        <begin position="383"/>
        <end position="834"/>
    </location>
</feature>
<feature type="propeptide" id="PRO_0000450196" description="Inhibition peptide" evidence="2">
    <location>
        <begin position="835"/>
        <end position="878"/>
    </location>
</feature>
<feature type="chain" id="PRO_0000450197" description="p18" evidence="8">
    <location>
        <begin position="879"/>
        <end position="989"/>
    </location>
</feature>
<feature type="region of interest" description="Disordered" evidence="6">
    <location>
        <begin position="26"/>
        <end position="91"/>
    </location>
</feature>
<feature type="region of interest" description="Disordered" evidence="6">
    <location>
        <begin position="165"/>
        <end position="245"/>
    </location>
</feature>
<feature type="region of interest" description="Interaction with PTKL" evidence="2">
    <location>
        <begin position="208"/>
        <end position="245"/>
    </location>
</feature>
<feature type="region of interest" description="Interaction with host VTN" evidence="2">
    <location>
        <begin position="365"/>
        <end position="382"/>
    </location>
</feature>
<feature type="region of interest" description="Thiol protease-like" evidence="2">
    <location>
        <begin position="577"/>
        <end position="802"/>
    </location>
</feature>
<feature type="compositionally biased region" description="Low complexity" evidence="6">
    <location>
        <begin position="52"/>
        <end position="87"/>
    </location>
</feature>
<feature type="compositionally biased region" description="Low complexity" evidence="6">
    <location>
        <begin position="167"/>
        <end position="180"/>
    </location>
</feature>
<feature type="compositionally biased region" description="Low complexity" evidence="6">
    <location>
        <begin position="191"/>
        <end position="225"/>
    </location>
</feature>
<feature type="active site" evidence="4">
    <location>
        <position position="754"/>
    </location>
</feature>
<feature type="active site" evidence="5">
    <location>
        <position position="779"/>
    </location>
</feature>
<feature type="site" description="Cleavage; by SUB1" evidence="2">
    <location>
        <begin position="184"/>
        <end position="185"/>
    </location>
</feature>
<feature type="site" description="Cleavage; by SUB1" evidence="2">
    <location>
        <begin position="382"/>
        <end position="383"/>
    </location>
</feature>
<feature type="site" description="Ancestral active site" evidence="2">
    <location>
        <position position="588"/>
    </location>
</feature>
<feature type="site" description="Cleavage" evidence="2">
    <location>
        <begin position="834"/>
        <end position="835"/>
    </location>
</feature>
<feature type="site" description="Cleavage; by SUB1" evidence="2">
    <location>
        <begin position="878"/>
        <end position="879"/>
    </location>
</feature>
<feature type="modified residue" description="Phosphoserine" evidence="2">
    <location>
        <position position="167"/>
    </location>
</feature>
<feature type="modified residue" description="Phosphothreonine" evidence="2">
    <location>
        <position position="541"/>
    </location>
</feature>
<feature type="modified residue" description="Phosphoserine" evidence="2">
    <location>
        <position position="858"/>
    </location>
</feature>
<feature type="glycosylation site" description="N-linked (GlcNAc...) asparagine" evidence="3">
    <location>
        <position position="168"/>
    </location>
</feature>
<feature type="glycosylation site" description="N-linked (GlcNAc...) asparagine" evidence="3">
    <location>
        <position position="310"/>
    </location>
</feature>
<feature type="glycosylation site" description="N-linked (GlcNAc...) asparagine" evidence="3">
    <location>
        <position position="820"/>
    </location>
</feature>
<feature type="disulfide bond" evidence="2">
    <location>
        <begin position="437"/>
        <end position="489"/>
    </location>
</feature>
<feature type="disulfide bond" evidence="2">
    <location>
        <begin position="559"/>
        <end position="564"/>
    </location>
</feature>
<feature type="disulfide bond" evidence="2">
    <location>
        <begin position="573"/>
        <end position="602"/>
    </location>
</feature>
<feature type="disulfide bond" evidence="2">
    <location>
        <begin position="585"/>
        <end position="628"/>
    </location>
</feature>
<feature type="disulfide bond" evidence="2">
    <location>
        <begin position="619"/>
        <end position="664"/>
    </location>
</feature>
<feature type="disulfide bond" evidence="2">
    <location>
        <begin position="747"/>
        <end position="801"/>
    </location>
</feature>
<feature type="sequence variant" description="In an allele.">
    <location>
        <begin position="178"/>
        <end position="191"/>
    </location>
</feature>
<feature type="sequence conflict" description="In Ref. 3; AAA29488." evidence="11" ref="3">
    <original>F</original>
    <variation>L</variation>
    <location>
        <position position="8"/>
    </location>
</feature>
<feature type="sequence conflict" description="In Ref. 3; CAA29734/AAA29488." evidence="11" ref="3">
    <original>A</original>
    <variation>T</variation>
    <location>
        <position position="44"/>
    </location>
</feature>
<feature type="sequence conflict" description="In Ref. 3; CAA29734." evidence="11" ref="3">
    <original>EKENKND</original>
    <variation>KKKKKGI</variation>
    <location>
        <begin position="356"/>
        <end position="362"/>
    </location>
</feature>
<feature type="helix" evidence="13">
    <location>
        <begin position="902"/>
        <end position="919"/>
    </location>
</feature>
<accession>P69192</accession>
<accession>P13823</accession>
<proteinExistence type="evidence at protein level"/>
<comment type="function">
    <text evidence="2">Plays an essential role during the asexual blood stage development by controlling the kinetics of merozoite egress from host erythrocytes (By similarity). Specifically, prevents premature rupture of the parasitophorous vacuole and host erythrocyte membranes (By similarity).</text>
</comment>
<comment type="function">
    <molecule>p47</molecule>
    <text evidence="1 7">May prevent merozoite phagocytosis by host monocytes via interaction with host VTN at the merozoite surface (By similarity). Plays a role in parasite growth (PubMed:12244052).</text>
</comment>
<comment type="subunit">
    <text evidence="2">May interact (via C-terminus) with PTKL (via SAM domain).</text>
</comment>
<comment type="subunit">
    <molecule>p47</molecule>
    <text evidence="1">Interacts (via C-terminus) with human VTN (via hemopexin repeat 2); may form heterotetramers of two VTN and SERA5 P47 heterodimers; the interaction may protect merozoites from phagocytosis by host monocytes; VTN glycosylation appears to be dispensable for the interaction.</text>
</comment>
<comment type="subunit">
    <molecule>p50</molecule>
    <text evidence="2">Monomer. Interacts with kinase CPK1/CDPK1 at the schizont stage.</text>
</comment>
<comment type="subcellular location">
    <molecule>Serine-repeat antigen protein 5</molecule>
    <subcellularLocation>
        <location evidence="2">Parasitophorous vacuole</location>
    </subcellularLocation>
    <text evidence="2">Secreted in large amount into the parasitophorous vacuole.</text>
</comment>
<comment type="subcellular location">
    <molecule>p18</molecule>
    <subcellularLocation>
        <location evidence="1">Secreted</location>
    </subcellularLocation>
    <text evidence="1">Secreted during merozoite egress from erythrocytes.</text>
</comment>
<comment type="subcellular location">
    <molecule>p25n</molecule>
    <subcellularLocation>
        <location evidence="2">Secreted</location>
    </subcellularLocation>
    <text evidence="1">Secreted during merozoite egress from erythrocytes.</text>
</comment>
<comment type="subcellular location">
    <molecule>p25c</molecule>
    <subcellularLocation>
        <location evidence="1">Secreted</location>
    </subcellularLocation>
    <text evidence="1">Secreted during merozoite egress from erythrocytes.</text>
</comment>
<comment type="subcellular location">
    <molecule>p47</molecule>
    <subcellularLocation>
        <location evidence="1">Secreted</location>
    </subcellularLocation>
    <subcellularLocation>
        <location evidence="2">Cell membrane</location>
        <topology evidence="2">Peripheral membrane protein</topology>
        <orientation evidence="1">Extracellular side</orientation>
    </subcellularLocation>
    <text evidence="1 2">Secreted during merozoite egress from erythrocytes (By similarity). Colocalizes at the merozoite surface with human VTN (By similarity).</text>
</comment>
<comment type="subcellular location">
    <molecule>p50</molecule>
    <subcellularLocation>
        <location evidence="2">Secreted</location>
    </subcellularLocation>
    <text evidence="2">Secreted during egress from host erythrocytes.</text>
</comment>
<comment type="subcellular location">
    <molecule>p56</molecule>
    <subcellularLocation>
        <location evidence="2">Secreted</location>
    </subcellularLocation>
    <text evidence="2">Secreted during egress from host erythrocytes.</text>
</comment>
<comment type="developmental stage">
    <text evidence="7 8">Expressed during parasite asexual blood stages, specifically at the late trophozoite and schizont stages (at protein level).</text>
</comment>
<comment type="PTM">
    <molecule>p50</molecule>
    <text evidence="2">Phosphorylation by CPK1/CDPK1 increases SERA5 protease activity towards a synthetic peptide in vitro.</text>
</comment>
<comment type="PTM">
    <text evidence="2 8">Just prior to merozoite egress from host erythrocytes, proteolytically cleaved into multiple fragments (PubMed:1501648). Cleaved by SUB1 into p47 and p73, p73 is further cleaved by SUB1 into p56 and p18 and p56 is further processed into p50 by an unidentified protease (PubMed:1501648). p47 remains covalently associated with p18 via disulfide bond (By similarity). p47 can be processed into p25n and p25c by SUB1 (By similarity). p25c and p25n remain associated with p18 (By similarity). Proteolytic processing is essential for merozoite egress from host erythrocytes (By similarity). The cleavage of the propeptide to produce p50 is necessary for protease activity and to promote merozoite egress (By similarity).</text>
</comment>
<comment type="biotechnology">
    <molecule>p47</molecule>
    <text evidence="7">Potential candidate for the development of parasite blood stage vaccines (PubMed:12244052). In vitro and in vivo, induces antibodies capable of inhibiting parasite growth (PubMed:12244052).</text>
</comment>
<comment type="similarity">
    <text evidence="4 5">Belongs to the peptidase C1 family.</text>
</comment>
<comment type="caution">
    <text evidence="2">In contrast to other serine-repeat antigen proteins (SERA) of the peptidase C1 family, contains a serine residue at the position of the canonical catalytic cysteine and has been shown to lack protease activity (By similarity). However, other studies show that it has protease activity towards synthetic peptides in vitro (By similarity).</text>
</comment>
<gene>
    <name evidence="10" type="primary">SERA5</name>
</gene>
<reference key="1">
    <citation type="journal article" date="1989" name="Mol. Biochem. Parasitol.">
        <title>Structure and expression of the Plasmodium falciparum SERA gene.</title>
        <authorList>
            <person name="Li W.-B."/>
            <person name="Bzik D.J."/>
            <person name="Horii T."/>
            <person name="Inselburg J."/>
        </authorList>
    </citation>
    <scope>NUCLEOTIDE SEQUENCE [GENOMIC DNA]</scope>
</reference>
<reference key="2">
    <citation type="journal article" date="1988" name="Mol. Biochem. Parasitol.">
        <title>Amino acid sequence of the serine-repeat antigen (SERA) of Plasmodium falciparum determined from cloned cDNA.</title>
        <authorList>
            <person name="Bzik D.J."/>
            <person name="Li W.-B."/>
            <person name="Horii T."/>
            <person name="Inselburg J."/>
        </authorList>
    </citation>
    <scope>NUCLEOTIDE SEQUENCE [MRNA]</scope>
</reference>
<reference key="3">
    <citation type="journal article" date="1988" name="Mol. Biochem. Parasitol.">
        <title>Characterization of antigen-expressing Plasmodium falciparum cDNA clones that are reactive with parasite inhibitory antibodies.</title>
        <authorList>
            <person name="Horii T."/>
            <person name="Bzik D.J."/>
            <person name="Inselburg J."/>
        </authorList>
    </citation>
    <scope>NUCLEOTIDE SEQUENCE [MRNA] OF 8-362</scope>
    <source>
        <strain>FCR-3 / Gambia</strain>
    </source>
</reference>
<reference key="4">
    <citation type="journal article" date="1992" name="Mol. Biochem. Parasitol.">
        <title>Intramolecular mapping of Plasmodium falciparum P126 proteolytic fragments by N-terminal amino acid sequencing.</title>
        <authorList>
            <person name="Debrabant A."/>
            <person name="Maes P."/>
            <person name="Delplace P."/>
            <person name="Dubremetz J.F."/>
            <person name="Tartar A."/>
            <person name="Camus D."/>
        </authorList>
    </citation>
    <scope>PROTEIN SEQUENCE OF 23-27; 383-392 AND 879-883</scope>
    <scope>DEVELOPMENTAL STAGE</scope>
    <scope>PROTEOLYTIC CLEAVAGE</scope>
</reference>
<reference key="5">
    <citation type="journal article" date="1989" name="Nature">
        <title>Malarial proteinase?</title>
        <authorList>
            <person name="Higgins D.G."/>
            <person name="McConnell D.J."/>
            <person name="Sharp P.M."/>
        </authorList>
    </citation>
    <scope>SIMILARITY TO THIOL PROTEASES OF A DOMAIN</scope>
</reference>
<reference key="6">
    <citation type="journal article" date="1989" name="Nature">
        <title>Cysteine or serine proteinase?</title>
        <authorList>
            <person name="Eakin A.E."/>
            <person name="Higaki J.N."/>
            <person name="McKerrow J.H."/>
            <person name="Craik C.S."/>
            <person name="Mottram J.C."/>
            <person name="Coombs G.H."/>
            <person name="North M.J."/>
        </authorList>
    </citation>
    <scope>SIMILARITY TO THIOL PROTEASES OF A DOMAIN</scope>
</reference>
<reference key="7">
    <citation type="journal article" date="2002" name="J. Biol. Chem.">
        <title>Serine repeat antigen (SERA5) is predominantly expressed among the SERA multigene family of Plasmodium falciparum, and the acquired antibody titers correlate with serum inhibition of the parasite growth.</title>
        <authorList>
            <person name="Aoki S."/>
            <person name="Li J."/>
            <person name="Itagaki S."/>
            <person name="Okech B.A."/>
            <person name="Egwang T.G."/>
            <person name="Matsuoka H."/>
            <person name="Palacpac N.M."/>
            <person name="Mitamura T."/>
            <person name="Horii T."/>
        </authorList>
    </citation>
    <scope>FUNCTION</scope>
    <scope>DEVELOPMENTAL STAGE</scope>
    <scope>BIOTECHNOLOGY</scope>
</reference>
<reference evidence="12" key="8">
    <citation type="journal article" date="2006" name="Biochimie">
        <title>Protective cellular immunity against P. falciparum malaria merozoites is associated with a different P7 and P8 residue orientation in the MHC-peptide-TCR complex.</title>
        <authorList>
            <person name="Patarroyo M.E."/>
            <person name="Salazar L.M."/>
            <person name="Cifuentes G."/>
            <person name="Lozano J.M."/>
            <person name="Delgado G."/>
            <person name="Rivera Z."/>
            <person name="Rosas J."/>
            <person name="Vargas L.E."/>
        </authorList>
    </citation>
    <scope>STRUCTURE BY NMR OF 901-920</scope>
</reference>
<dbReference type="EC" id="3.4.22.-" evidence="2"/>
<dbReference type="EMBL" id="J04000">
    <property type="protein sequence ID" value="AAA16791.1"/>
    <property type="molecule type" value="Genomic_DNA"/>
</dbReference>
<dbReference type="EMBL" id="X06427">
    <property type="protein sequence ID" value="CAA29734.1"/>
    <property type="molecule type" value="mRNA"/>
</dbReference>
<dbReference type="EMBL" id="J03993">
    <property type="protein sequence ID" value="AAA29763.1"/>
    <property type="molecule type" value="mRNA"/>
</dbReference>
<dbReference type="EMBL" id="M21323">
    <property type="protein sequence ID" value="AAA29488.1"/>
    <property type="molecule type" value="mRNA"/>
</dbReference>
<dbReference type="PIR" id="A54505">
    <property type="entry name" value="A54505"/>
</dbReference>
<dbReference type="PIR" id="A54512">
    <property type="entry name" value="A54512"/>
</dbReference>
<dbReference type="PDB" id="2MUG">
    <property type="method" value="NMR"/>
    <property type="chains" value="A=901-920"/>
</dbReference>
<dbReference type="PDBsum" id="2MUG"/>
<dbReference type="BMRB" id="P69192"/>
<dbReference type="SMR" id="P69192"/>
<dbReference type="MEROPS" id="C01.984"/>
<dbReference type="GlyCosmos" id="P69192">
    <property type="glycosylation" value="3 sites, No reported glycans"/>
</dbReference>
<dbReference type="GO" id="GO:0005886">
    <property type="term" value="C:plasma membrane"/>
    <property type="evidence" value="ECO:0007669"/>
    <property type="project" value="UniProtKB-SubCell"/>
</dbReference>
<dbReference type="GO" id="GO:0020003">
    <property type="term" value="C:symbiont-containing vacuole"/>
    <property type="evidence" value="ECO:0007669"/>
    <property type="project" value="UniProtKB-SubCell"/>
</dbReference>
<dbReference type="GO" id="GO:0008234">
    <property type="term" value="F:cysteine-type peptidase activity"/>
    <property type="evidence" value="ECO:0007669"/>
    <property type="project" value="UniProtKB-KW"/>
</dbReference>
<dbReference type="GO" id="GO:0006508">
    <property type="term" value="P:proteolysis"/>
    <property type="evidence" value="ECO:0007669"/>
    <property type="project" value="UniProtKB-KW"/>
</dbReference>
<dbReference type="CDD" id="cd02619">
    <property type="entry name" value="Peptidase_C1"/>
    <property type="match status" value="1"/>
</dbReference>
<dbReference type="FunFam" id="3.90.70.10:FF:000036">
    <property type="entry name" value="Serine repeat antigen 5"/>
    <property type="match status" value="1"/>
</dbReference>
<dbReference type="Gene3D" id="3.90.70.10">
    <property type="entry name" value="Cysteine proteinases"/>
    <property type="match status" value="1"/>
</dbReference>
<dbReference type="InterPro" id="IPR038765">
    <property type="entry name" value="Papain-like_cys_pep_sf"/>
</dbReference>
<dbReference type="InterPro" id="IPR025661">
    <property type="entry name" value="Pept_asp_AS"/>
</dbReference>
<dbReference type="InterPro" id="IPR025660">
    <property type="entry name" value="Pept_his_AS"/>
</dbReference>
<dbReference type="InterPro" id="IPR013128">
    <property type="entry name" value="Peptidase_C1A"/>
</dbReference>
<dbReference type="InterPro" id="IPR000668">
    <property type="entry name" value="Peptidase_C1A_C"/>
</dbReference>
<dbReference type="PANTHER" id="PTHR12411">
    <property type="entry name" value="CYSTEINE PROTEASE FAMILY C1-RELATED"/>
    <property type="match status" value="1"/>
</dbReference>
<dbReference type="Pfam" id="PF00112">
    <property type="entry name" value="Peptidase_C1"/>
    <property type="match status" value="1"/>
</dbReference>
<dbReference type="SMART" id="SM00645">
    <property type="entry name" value="Pept_C1"/>
    <property type="match status" value="1"/>
</dbReference>
<dbReference type="SUPFAM" id="SSF54001">
    <property type="entry name" value="Cysteine proteinases"/>
    <property type="match status" value="1"/>
</dbReference>
<dbReference type="PROSITE" id="PS00640">
    <property type="entry name" value="THIOL_PROTEASE_ASN"/>
    <property type="match status" value="1"/>
</dbReference>
<dbReference type="PROSITE" id="PS00639">
    <property type="entry name" value="THIOL_PROTEASE_HIS"/>
    <property type="match status" value="1"/>
</dbReference>